<proteinExistence type="inferred from homology"/>
<sequence length="449" mass="49868">MSHIKFDYSKVLDKFVAPHEVEYMQSQVTAADELIRKGTGAGSDFLGWLDLPEKYDREEFDRILKAAEQIKSDSDVLVVIGIGGSYLGAKAAIDFLNHHFANLQTKEERKAPQILYAGNSISSTYLADLVEYVADKDFSVNVISKSGTTTEPAIAFRVFKELLVKKYGQEEANKRIYATTDRQKGAVKVEADANGWGTFVVPDDIGGRFSVLTAVGLLSIAASGADIKALMEGANAARKDYTSDKISENEAYQYAAVRNILYRKGYATEILVNYEPSLQYFSEWWKQLAGESEGKDQKGIYPTSANFSTDLHSLGQFIQEGTRIMFETVVRVDKPRKNVLIPTLEEDLDGLGYLQGKDVDFVNKKATDGVLLAHTDGDVPNMYVTLPEQDAFTLGYTIYFFELAIALSGYLNAINPFDQPGVEAYKRNMFALLGKPGFEELSKELNARL</sequence>
<name>G6PI_STRPN</name>
<evidence type="ECO:0000255" key="1">
    <source>
        <dbReference type="HAMAP-Rule" id="MF_00473"/>
    </source>
</evidence>
<evidence type="ECO:0000305" key="2"/>
<comment type="function">
    <text evidence="1">Catalyzes the reversible isomerization of glucose-6-phosphate to fructose-6-phosphate.</text>
</comment>
<comment type="catalytic activity">
    <reaction evidence="1">
        <text>alpha-D-glucose 6-phosphate = beta-D-fructose 6-phosphate</text>
        <dbReference type="Rhea" id="RHEA:11816"/>
        <dbReference type="ChEBI" id="CHEBI:57634"/>
        <dbReference type="ChEBI" id="CHEBI:58225"/>
        <dbReference type="EC" id="5.3.1.9"/>
    </reaction>
</comment>
<comment type="pathway">
    <text evidence="1">Carbohydrate biosynthesis; gluconeogenesis.</text>
</comment>
<comment type="pathway">
    <text evidence="1">Carbohydrate degradation; glycolysis; D-glyceraldehyde 3-phosphate and glycerone phosphate from D-glucose: step 2/4.</text>
</comment>
<comment type="subcellular location">
    <subcellularLocation>
        <location evidence="1">Cytoplasm</location>
    </subcellularLocation>
</comment>
<comment type="similarity">
    <text evidence="1 2">Belongs to the GPI family.</text>
</comment>
<organism>
    <name type="scientific">Streptococcus pneumoniae serotype 4 (strain ATCC BAA-334 / TIGR4)</name>
    <dbReference type="NCBI Taxonomy" id="170187"/>
    <lineage>
        <taxon>Bacteria</taxon>
        <taxon>Bacillati</taxon>
        <taxon>Bacillota</taxon>
        <taxon>Bacilli</taxon>
        <taxon>Lactobacillales</taxon>
        <taxon>Streptococcaceae</taxon>
        <taxon>Streptococcus</taxon>
    </lineage>
</organism>
<keyword id="KW-0963">Cytoplasm</keyword>
<keyword id="KW-0312">Gluconeogenesis</keyword>
<keyword id="KW-0324">Glycolysis</keyword>
<keyword id="KW-0413">Isomerase</keyword>
<keyword id="KW-1185">Reference proteome</keyword>
<gene>
    <name evidence="1" type="primary">pgi</name>
    <name type="ordered locus">SP_2070</name>
</gene>
<protein>
    <recommendedName>
        <fullName evidence="1">Glucose-6-phosphate isomerase</fullName>
        <shortName evidence="1">GPI</shortName>
        <ecNumber evidence="1">5.3.1.9</ecNumber>
    </recommendedName>
    <alternativeName>
        <fullName evidence="1">Phosphoglucose isomerase</fullName>
        <shortName evidence="1">PGI</shortName>
    </alternativeName>
    <alternativeName>
        <fullName evidence="1">Phosphohexose isomerase</fullName>
        <shortName evidence="1">PHI</shortName>
    </alternativeName>
</protein>
<reference key="1">
    <citation type="journal article" date="2001" name="Science">
        <title>Complete genome sequence of a virulent isolate of Streptococcus pneumoniae.</title>
        <authorList>
            <person name="Tettelin H."/>
            <person name="Nelson K.E."/>
            <person name="Paulsen I.T."/>
            <person name="Eisen J.A."/>
            <person name="Read T.D."/>
            <person name="Peterson S.N."/>
            <person name="Heidelberg J.F."/>
            <person name="DeBoy R.T."/>
            <person name="Haft D.H."/>
            <person name="Dodson R.J."/>
            <person name="Durkin A.S."/>
            <person name="Gwinn M.L."/>
            <person name="Kolonay J.F."/>
            <person name="Nelson W.C."/>
            <person name="Peterson J.D."/>
            <person name="Umayam L.A."/>
            <person name="White O."/>
            <person name="Salzberg S.L."/>
            <person name="Lewis M.R."/>
            <person name="Radune D."/>
            <person name="Holtzapple E.K."/>
            <person name="Khouri H.M."/>
            <person name="Wolf A.M."/>
            <person name="Utterback T.R."/>
            <person name="Hansen C.L."/>
            <person name="McDonald L.A."/>
            <person name="Feldblyum T.V."/>
            <person name="Angiuoli S.V."/>
            <person name="Dickinson T."/>
            <person name="Hickey E.K."/>
            <person name="Holt I.E."/>
            <person name="Loftus B.J."/>
            <person name="Yang F."/>
            <person name="Smith H.O."/>
            <person name="Venter J.C."/>
            <person name="Dougherty B.A."/>
            <person name="Morrison D.A."/>
            <person name="Hollingshead S.K."/>
            <person name="Fraser C.M."/>
        </authorList>
    </citation>
    <scope>NUCLEOTIDE SEQUENCE [LARGE SCALE GENOMIC DNA]</scope>
    <source>
        <strain>ATCC BAA-334 / TIGR4</strain>
    </source>
</reference>
<dbReference type="EC" id="5.3.1.9" evidence="1"/>
<dbReference type="EMBL" id="AE005672">
    <property type="protein sequence ID" value="AAK76133.1"/>
    <property type="molecule type" value="Genomic_DNA"/>
</dbReference>
<dbReference type="PIR" id="D95242">
    <property type="entry name" value="D95242"/>
</dbReference>
<dbReference type="RefSeq" id="WP_000018264.1">
    <property type="nucleotide sequence ID" value="NC_003028.3"/>
</dbReference>
<dbReference type="SMR" id="Q97NG0"/>
<dbReference type="PaxDb" id="170187-SP_2070"/>
<dbReference type="EnsemblBacteria" id="AAK76133">
    <property type="protein sequence ID" value="AAK76133"/>
    <property type="gene ID" value="SP_2070"/>
</dbReference>
<dbReference type="KEGG" id="spn:SP_2070"/>
<dbReference type="eggNOG" id="COG0166">
    <property type="taxonomic scope" value="Bacteria"/>
</dbReference>
<dbReference type="PhylomeDB" id="Q97NG0"/>
<dbReference type="BioCyc" id="SPNE170187:G1FZB-2156-MONOMER"/>
<dbReference type="UniPathway" id="UPA00109">
    <property type="reaction ID" value="UER00181"/>
</dbReference>
<dbReference type="UniPathway" id="UPA00138"/>
<dbReference type="Proteomes" id="UP000000585">
    <property type="component" value="Chromosome"/>
</dbReference>
<dbReference type="GO" id="GO:0005829">
    <property type="term" value="C:cytosol"/>
    <property type="evidence" value="ECO:0007669"/>
    <property type="project" value="TreeGrafter"/>
</dbReference>
<dbReference type="GO" id="GO:0097367">
    <property type="term" value="F:carbohydrate derivative binding"/>
    <property type="evidence" value="ECO:0007669"/>
    <property type="project" value="InterPro"/>
</dbReference>
<dbReference type="GO" id="GO:0004347">
    <property type="term" value="F:glucose-6-phosphate isomerase activity"/>
    <property type="evidence" value="ECO:0007669"/>
    <property type="project" value="UniProtKB-UniRule"/>
</dbReference>
<dbReference type="GO" id="GO:0048029">
    <property type="term" value="F:monosaccharide binding"/>
    <property type="evidence" value="ECO:0007669"/>
    <property type="project" value="TreeGrafter"/>
</dbReference>
<dbReference type="GO" id="GO:0006094">
    <property type="term" value="P:gluconeogenesis"/>
    <property type="evidence" value="ECO:0007669"/>
    <property type="project" value="UniProtKB-UniRule"/>
</dbReference>
<dbReference type="GO" id="GO:0051156">
    <property type="term" value="P:glucose 6-phosphate metabolic process"/>
    <property type="evidence" value="ECO:0007669"/>
    <property type="project" value="TreeGrafter"/>
</dbReference>
<dbReference type="GO" id="GO:0006096">
    <property type="term" value="P:glycolytic process"/>
    <property type="evidence" value="ECO:0007669"/>
    <property type="project" value="UniProtKB-UniRule"/>
</dbReference>
<dbReference type="CDD" id="cd05015">
    <property type="entry name" value="SIS_PGI_1"/>
    <property type="match status" value="1"/>
</dbReference>
<dbReference type="CDD" id="cd05016">
    <property type="entry name" value="SIS_PGI_2"/>
    <property type="match status" value="1"/>
</dbReference>
<dbReference type="FunFam" id="3.40.50.10490:FF:000015">
    <property type="entry name" value="Glucose-6-phosphate isomerase"/>
    <property type="match status" value="1"/>
</dbReference>
<dbReference type="FunFam" id="3.40.50.10490:FF:000016">
    <property type="entry name" value="Glucose-6-phosphate isomerase"/>
    <property type="match status" value="1"/>
</dbReference>
<dbReference type="Gene3D" id="3.40.50.10490">
    <property type="entry name" value="Glucose-6-phosphate isomerase like protein, domain 1"/>
    <property type="match status" value="3"/>
</dbReference>
<dbReference type="HAMAP" id="MF_00473">
    <property type="entry name" value="G6P_isomerase"/>
    <property type="match status" value="1"/>
</dbReference>
<dbReference type="InterPro" id="IPR001672">
    <property type="entry name" value="G6P_Isomerase"/>
</dbReference>
<dbReference type="InterPro" id="IPR018189">
    <property type="entry name" value="Phosphoglucose_isomerase_CS"/>
</dbReference>
<dbReference type="InterPro" id="IPR046348">
    <property type="entry name" value="SIS_dom_sf"/>
</dbReference>
<dbReference type="InterPro" id="IPR035476">
    <property type="entry name" value="SIS_PGI_1"/>
</dbReference>
<dbReference type="InterPro" id="IPR035482">
    <property type="entry name" value="SIS_PGI_2"/>
</dbReference>
<dbReference type="NCBIfam" id="NF010697">
    <property type="entry name" value="PRK14097.1"/>
    <property type="match status" value="1"/>
</dbReference>
<dbReference type="PANTHER" id="PTHR11469">
    <property type="entry name" value="GLUCOSE-6-PHOSPHATE ISOMERASE"/>
    <property type="match status" value="1"/>
</dbReference>
<dbReference type="PANTHER" id="PTHR11469:SF1">
    <property type="entry name" value="GLUCOSE-6-PHOSPHATE ISOMERASE"/>
    <property type="match status" value="1"/>
</dbReference>
<dbReference type="Pfam" id="PF00342">
    <property type="entry name" value="PGI"/>
    <property type="match status" value="1"/>
</dbReference>
<dbReference type="PRINTS" id="PR00662">
    <property type="entry name" value="G6PISOMERASE"/>
</dbReference>
<dbReference type="SUPFAM" id="SSF53697">
    <property type="entry name" value="SIS domain"/>
    <property type="match status" value="1"/>
</dbReference>
<dbReference type="PROSITE" id="PS00765">
    <property type="entry name" value="P_GLUCOSE_ISOMERASE_1"/>
    <property type="match status" value="1"/>
</dbReference>
<dbReference type="PROSITE" id="PS00174">
    <property type="entry name" value="P_GLUCOSE_ISOMERASE_2"/>
    <property type="match status" value="1"/>
</dbReference>
<dbReference type="PROSITE" id="PS51463">
    <property type="entry name" value="P_GLUCOSE_ISOMERASE_3"/>
    <property type="match status" value="1"/>
</dbReference>
<feature type="chain" id="PRO_0000180738" description="Glucose-6-phosphate isomerase">
    <location>
        <begin position="1"/>
        <end position="449"/>
    </location>
</feature>
<feature type="active site" description="Proton donor" evidence="1">
    <location>
        <position position="291"/>
    </location>
</feature>
<feature type="active site" evidence="1">
    <location>
        <position position="312"/>
    </location>
</feature>
<feature type="active site" evidence="1">
    <location>
        <position position="426"/>
    </location>
</feature>
<accession>Q97NG0</accession>